<name>TIF5B_ARATH</name>
<evidence type="ECO:0000250" key="1"/>
<evidence type="ECO:0000250" key="2">
    <source>
        <dbReference type="UniProtKB" id="Q7XPM8"/>
    </source>
</evidence>
<evidence type="ECO:0000250" key="3">
    <source>
        <dbReference type="UniProtKB" id="Q9M246"/>
    </source>
</evidence>
<evidence type="ECO:0000255" key="4">
    <source>
        <dbReference type="PROSITE-ProRule" id="PRU00650"/>
    </source>
</evidence>
<evidence type="ECO:0000269" key="5">
    <source>
    </source>
</evidence>
<evidence type="ECO:0000269" key="6">
    <source>
    </source>
</evidence>
<evidence type="ECO:0000305" key="7"/>
<reference key="1">
    <citation type="journal article" date="1999" name="Nature">
        <title>Sequence and analysis of chromosome 2 of the plant Arabidopsis thaliana.</title>
        <authorList>
            <person name="Lin X."/>
            <person name="Kaul S."/>
            <person name="Rounsley S.D."/>
            <person name="Shea T.P."/>
            <person name="Benito M.-I."/>
            <person name="Town C.D."/>
            <person name="Fujii C.Y."/>
            <person name="Mason T.M."/>
            <person name="Bowman C.L."/>
            <person name="Barnstead M.E."/>
            <person name="Feldblyum T.V."/>
            <person name="Buell C.R."/>
            <person name="Ketchum K.A."/>
            <person name="Lee J.J."/>
            <person name="Ronning C.M."/>
            <person name="Koo H.L."/>
            <person name="Moffat K.S."/>
            <person name="Cronin L.A."/>
            <person name="Shen M."/>
            <person name="Pai G."/>
            <person name="Van Aken S."/>
            <person name="Umayam L."/>
            <person name="Tallon L.J."/>
            <person name="Gill J.E."/>
            <person name="Adams M.D."/>
            <person name="Carrera A.J."/>
            <person name="Creasy T.H."/>
            <person name="Goodman H.M."/>
            <person name="Somerville C.R."/>
            <person name="Copenhaver G.P."/>
            <person name="Preuss D."/>
            <person name="Nierman W.C."/>
            <person name="White O."/>
            <person name="Eisen J.A."/>
            <person name="Salzberg S.L."/>
            <person name="Fraser C.M."/>
            <person name="Venter J.C."/>
        </authorList>
    </citation>
    <scope>NUCLEOTIDE SEQUENCE [LARGE SCALE GENOMIC DNA]</scope>
    <source>
        <strain>cv. Columbia</strain>
    </source>
</reference>
<reference key="2">
    <citation type="journal article" date="2017" name="Plant J.">
        <title>Araport11: a complete reannotation of the Arabidopsis thaliana reference genome.</title>
        <authorList>
            <person name="Cheng C.Y."/>
            <person name="Krishnakumar V."/>
            <person name="Chan A.P."/>
            <person name="Thibaud-Nissen F."/>
            <person name="Schobel S."/>
            <person name="Town C.D."/>
        </authorList>
    </citation>
    <scope>GENOME REANNOTATION</scope>
    <source>
        <strain>cv. Columbia</strain>
    </source>
</reference>
<reference key="3">
    <citation type="submission" date="2003-12" db="EMBL/GenBank/DDBJ databases">
        <title>Arabidopsis ORF clones.</title>
        <authorList>
            <person name="Shinn P."/>
            <person name="Chen H."/>
            <person name="Cheuk R.F."/>
            <person name="Kim C.J."/>
            <person name="Ecker J.R."/>
        </authorList>
    </citation>
    <scope>NUCLEOTIDE SEQUENCE [LARGE SCALE MRNA]</scope>
    <source>
        <strain>cv. Columbia</strain>
    </source>
</reference>
<reference key="4">
    <citation type="journal article" date="2007" name="Nature">
        <title>JAZ repressor proteins are targets of the SCF(COI1) complex during jasmonate signalling.</title>
        <authorList>
            <person name="Thines B."/>
            <person name="Katsir L."/>
            <person name="Melotto M."/>
            <person name="Niu Y."/>
            <person name="Mandaokar A."/>
            <person name="Liu G."/>
            <person name="Nomura K."/>
            <person name="He S.Y."/>
            <person name="Howe G.A."/>
            <person name="Browse J."/>
        </authorList>
    </citation>
    <scope>INDUCTION BY JASMONATE</scope>
</reference>
<reference key="5">
    <citation type="journal article" date="2007" name="Nature">
        <title>The JAZ family of repressors is the missing link in jasmonate signalling.</title>
        <authorList>
            <person name="Chini A."/>
            <person name="Fonseca S."/>
            <person name="Fernandez G."/>
            <person name="Adie B."/>
            <person name="Chico J.M."/>
            <person name="Lorenzo O."/>
            <person name="Garcia-Casado G."/>
            <person name="Lopez-Vidriero I."/>
            <person name="Lozano F.M."/>
            <person name="Ponce M.R."/>
            <person name="Micol J.L."/>
            <person name="Solano R."/>
        </authorList>
    </citation>
    <scope>GENE FAMILY</scope>
    <scope>NOMENCLATURE</scope>
</reference>
<reference key="6">
    <citation type="journal article" date="2007" name="Plant Cell">
        <title>A downstream mediator in the growth repression limb of the jasmonate pathway.</title>
        <authorList>
            <person name="Yan Y."/>
            <person name="Stolz S."/>
            <person name="Chetelat A."/>
            <person name="Reymond P."/>
            <person name="Pagni M."/>
            <person name="Dubugnon L."/>
            <person name="Farmer E.E."/>
        </authorList>
    </citation>
    <scope>DOMAIN</scope>
</reference>
<reference key="7">
    <citation type="journal article" date="2007" name="Trends Plant Sci.">
        <title>The tify family previously known as ZIM.</title>
        <authorList>
            <person name="Vanholme B."/>
            <person name="Grunewald W."/>
            <person name="Bateman A."/>
            <person name="Kohchi T."/>
            <person name="Gheysen G."/>
        </authorList>
    </citation>
    <scope>GENE FAMILY</scope>
    <scope>NOMENCLATURE</scope>
</reference>
<reference key="8">
    <citation type="journal article" date="2008" name="Plant Physiol.">
        <title>Regulation and function of Arabidopsis JASMONATE ZIM-domain genes in response to wounding and herbivory.</title>
        <authorList>
            <person name="Chung H.S."/>
            <person name="Koo A.J."/>
            <person name="Gao X."/>
            <person name="Jayanty S."/>
            <person name="Thines B."/>
            <person name="Jones A.D."/>
            <person name="Howe G.A."/>
        </authorList>
    </citation>
    <scope>INDUCTION BY WOUNDING AND HERBIVORY</scope>
</reference>
<accession>O64687</accession>
<protein>
    <recommendedName>
        <fullName>Protein TIFY 5B</fullName>
    </recommendedName>
    <alternativeName>
        <fullName>Jasmonate ZIM domain-containing protein 7</fullName>
    </alternativeName>
</protein>
<keyword id="KW-1184">Jasmonic acid signaling pathway</keyword>
<keyword id="KW-0539">Nucleus</keyword>
<keyword id="KW-0611">Plant defense</keyword>
<keyword id="KW-1185">Reference proteome</keyword>
<keyword id="KW-0804">Transcription</keyword>
<keyword id="KW-0805">Transcription regulation</keyword>
<keyword id="KW-0832">Ubl conjugation</keyword>
<feature type="chain" id="PRO_0000300646" description="Protein TIFY 5B">
    <location>
        <begin position="1"/>
        <end position="148"/>
    </location>
</feature>
<feature type="domain" description="Tify" evidence="4">
    <location>
        <begin position="54"/>
        <end position="89"/>
    </location>
</feature>
<organism>
    <name type="scientific">Arabidopsis thaliana</name>
    <name type="common">Mouse-ear cress</name>
    <dbReference type="NCBI Taxonomy" id="3702"/>
    <lineage>
        <taxon>Eukaryota</taxon>
        <taxon>Viridiplantae</taxon>
        <taxon>Streptophyta</taxon>
        <taxon>Embryophyta</taxon>
        <taxon>Tracheophyta</taxon>
        <taxon>Spermatophyta</taxon>
        <taxon>Magnoliopsida</taxon>
        <taxon>eudicotyledons</taxon>
        <taxon>Gunneridae</taxon>
        <taxon>Pentapetalae</taxon>
        <taxon>rosids</taxon>
        <taxon>malvids</taxon>
        <taxon>Brassicales</taxon>
        <taxon>Brassicaceae</taxon>
        <taxon>Camelineae</taxon>
        <taxon>Arabidopsis</taxon>
    </lineage>
</organism>
<gene>
    <name type="primary">TIFY 5B</name>
    <name type="synonym">JAZ7</name>
    <name type="ordered locus">At2g34600</name>
    <name type="ORF">T31E10.6</name>
</gene>
<sequence length="148" mass="16974">MIIIIKNCDKPLLNFKEMEMQTKCDLELRLLTSSYDSDFHSSLDESSSSEISQPKQESQILTIFYNGHMCVSSDLTHLEANAILSLASRDVEEKSLSLRSSDGSDPPTIPNNSTRFHYQKASMKRSLHSFLQKRSLRIQATSPYHRYR</sequence>
<comment type="function">
    <text evidence="3">Repressor of jasmonate responses.</text>
</comment>
<comment type="interaction">
    <interactant intactId="EBI-15403807">
        <id>O64687</id>
    </interactant>
    <interactant intactId="EBI-15406909">
        <id>O49687</id>
        <label>MYC4</label>
    </interactant>
    <organismsDiffer>false</organismsDiffer>
    <experiments>3</experiments>
</comment>
<comment type="interaction">
    <interactant intactId="EBI-15403807">
        <id>O64687</id>
    </interactant>
    <interactant intactId="EBI-4426144">
        <id>Q9C9L2</id>
        <label>TCP15</label>
    </interactant>
    <organismsDiffer>false</organismsDiffer>
    <experiments>3</experiments>
</comment>
<comment type="subcellular location">
    <subcellularLocation>
        <location evidence="7">Nucleus</location>
    </subcellularLocation>
</comment>
<comment type="induction">
    <text evidence="5 6">Up-regulated by jasmonate, wounding and herbivory.</text>
</comment>
<comment type="domain">
    <text evidence="1">The jas domain (120-144) is required for interaction with COI1.</text>
</comment>
<comment type="PTM">
    <text evidence="2">Ubiquitinated. Targeted for degradation by the SCF(COI1) E3 ubiquitin ligase-proteasome pathway during jasmonate signaling.</text>
</comment>
<comment type="similarity">
    <text evidence="7">Belongs to the TIFY/JAZ family.</text>
</comment>
<proteinExistence type="evidence at protein level"/>
<dbReference type="EMBL" id="AC004077">
    <property type="protein sequence ID" value="AAC26695.1"/>
    <property type="molecule type" value="Genomic_DNA"/>
</dbReference>
<dbReference type="EMBL" id="CP002685">
    <property type="protein sequence ID" value="AEC08997.1"/>
    <property type="molecule type" value="Genomic_DNA"/>
</dbReference>
<dbReference type="EMBL" id="BT010666">
    <property type="protein sequence ID" value="AAR20723.1"/>
    <property type="molecule type" value="mRNA"/>
</dbReference>
<dbReference type="EMBL" id="BT010963">
    <property type="protein sequence ID" value="AAR24741.1"/>
    <property type="molecule type" value="mRNA"/>
</dbReference>
<dbReference type="PIR" id="F84758">
    <property type="entry name" value="F84758"/>
</dbReference>
<dbReference type="RefSeq" id="NP_181007.1">
    <property type="nucleotide sequence ID" value="NM_129014.4"/>
</dbReference>
<dbReference type="SMR" id="O64687"/>
<dbReference type="BioGRID" id="3371">
    <property type="interactions" value="10"/>
</dbReference>
<dbReference type="DIP" id="DIP-60684N"/>
<dbReference type="FunCoup" id="O64687">
    <property type="interactions" value="26"/>
</dbReference>
<dbReference type="IntAct" id="O64687">
    <property type="interactions" value="10"/>
</dbReference>
<dbReference type="STRING" id="3702.O64687"/>
<dbReference type="PaxDb" id="3702-AT2G34600.1"/>
<dbReference type="EnsemblPlants" id="AT2G34600.1">
    <property type="protein sequence ID" value="AT2G34600.1"/>
    <property type="gene ID" value="AT2G34600"/>
</dbReference>
<dbReference type="GeneID" id="818025"/>
<dbReference type="Gramene" id="AT2G34600.1">
    <property type="protein sequence ID" value="AT2G34600.1"/>
    <property type="gene ID" value="AT2G34600"/>
</dbReference>
<dbReference type="KEGG" id="ath:AT2G34600"/>
<dbReference type="Araport" id="AT2G34600"/>
<dbReference type="TAIR" id="AT2G34600">
    <property type="gene designation" value="JAZ7"/>
</dbReference>
<dbReference type="HOGENOM" id="CLU_113486_0_0_1"/>
<dbReference type="InParanoid" id="O64687"/>
<dbReference type="OMA" id="FYNGHIC"/>
<dbReference type="OrthoDB" id="782771at2759"/>
<dbReference type="PhylomeDB" id="O64687"/>
<dbReference type="PRO" id="PR:O64687"/>
<dbReference type="Proteomes" id="UP000006548">
    <property type="component" value="Chromosome 2"/>
</dbReference>
<dbReference type="ExpressionAtlas" id="O64687">
    <property type="expression patterns" value="baseline and differential"/>
</dbReference>
<dbReference type="GO" id="GO:0005634">
    <property type="term" value="C:nucleus"/>
    <property type="evidence" value="ECO:0007669"/>
    <property type="project" value="UniProtKB-SubCell"/>
</dbReference>
<dbReference type="GO" id="GO:0006952">
    <property type="term" value="P:defense response"/>
    <property type="evidence" value="ECO:0007669"/>
    <property type="project" value="UniProtKB-KW"/>
</dbReference>
<dbReference type="GO" id="GO:0009753">
    <property type="term" value="P:response to jasmonic acid"/>
    <property type="evidence" value="ECO:0000270"/>
    <property type="project" value="TAIR"/>
</dbReference>
<dbReference type="InterPro" id="IPR040390">
    <property type="entry name" value="TIFY/JAZ"/>
</dbReference>
<dbReference type="InterPro" id="IPR010399">
    <property type="entry name" value="Tify_dom"/>
</dbReference>
<dbReference type="PANTHER" id="PTHR33077">
    <property type="entry name" value="PROTEIN TIFY 4A-RELATED-RELATED"/>
    <property type="match status" value="1"/>
</dbReference>
<dbReference type="PANTHER" id="PTHR33077:SF17">
    <property type="entry name" value="PROTEIN TIFY 5B"/>
    <property type="match status" value="1"/>
</dbReference>
<dbReference type="Pfam" id="PF06200">
    <property type="entry name" value="tify"/>
    <property type="match status" value="1"/>
</dbReference>
<dbReference type="SMART" id="SM00979">
    <property type="entry name" value="TIFY"/>
    <property type="match status" value="1"/>
</dbReference>
<dbReference type="PROSITE" id="PS51320">
    <property type="entry name" value="TIFY"/>
    <property type="match status" value="1"/>
</dbReference>